<reference key="1">
    <citation type="journal article" date="2019" name="J. Microbiol. Biotechnol.">
        <title>A gene cluster for the biosynthesis of dibenzodioxocinons in the endophyte Pestalotiopsis microspora, a taxol producer.</title>
        <authorList>
            <person name="Liu Y."/>
            <person name="Chen L."/>
            <person name="Xie Q."/>
            <person name="Yu X."/>
            <person name="Duan A."/>
            <person name="Lin Y."/>
            <person name="Xiang B."/>
            <person name="Hao X."/>
            <person name="Chen W."/>
            <person name="Zhu X."/>
        </authorList>
    </citation>
    <scope>NUCLEOTIDE SEQUENCE [MRNA]</scope>
    <scope>FUNCTION</scope>
    <scope>PATHWAY</scope>
    <source>
        <strain>NK17</strain>
    </source>
</reference>
<reference key="2">
    <citation type="journal article" date="2022" name="Microbiol. Res.">
        <title>Acquiring novel chemicals by overexpression of a transcription factor DibT in the dibenzodioxocinone biosynthetic cluster in Pestalotiopsis microspora.</title>
        <authorList>
            <person name="Liu Y."/>
            <person name="Fu Y."/>
            <person name="Zhou M."/>
            <person name="Hao X."/>
            <person name="Zhang P."/>
            <person name="Zhu X."/>
        </authorList>
    </citation>
    <scope>INDUCTION</scope>
</reference>
<keyword id="KW-0503">Monooxygenase</keyword>
<keyword id="KW-0560">Oxidoreductase</keyword>
<comment type="function">
    <text evidence="2 6">Putative monooxygenase; part of the gene cluster that mediates the biosynthesis of dibenzodioxocinones such as pestalotiollide B, a novel class of inhibitors against cholesterol ester transfer protein (CEPT) (PubMed:31474098). The biosynthesis initiates from condensation of acetate and malonate units catalyzed by the non-reducing PKS pks8/GME11356. Pks8/GME11356 lacks a thioesterase (TE) domain, which is important to the cyclizing of the third ring of atrochrysone carboxylic acid, and the esterase GME11355 might play the role of TE and catalyzes the cyclization reaction of the C ring. The lactamase-like protein GME11357 (or other beta-lactamases in Pestalotiopsis microspora) probably hydrolyzes the thioester bond between the ACP of pks8/GME11356 and the intermediate to release atrochrysone carboxylic acid, which is spontaneously dehydrates to form endocrocin anthrone. Endocrocin anthrone is further converted to emodin via the endocrocin intermediate. Emodin is then oxidized by several enzymes such as the Baeyer-Villiger oxidase GME11358, the oxidoreductase GME11367, the short chain dehydrogenase/reductase GME11373, as well as by other oxidoreductases from the cluster, to modify the A and C rings and open the B ring, and finally yield monodictyphenone. The prenyltransferase GME11375 may catalyze the addition reaction between the C5 side chains and the carbon bone of dibenzodioxocinones. The remaining biochemical reactions to the final product dibenzodioxocinones should be methylation catalyzed by methyltransferase GME11366 and reduction and lactonization reaction catalyzed by a series of oxidordeuctases (Probable).</text>
</comment>
<comment type="pathway">
    <text evidence="6">Secondary metabolite biosynthesis.</text>
</comment>
<comment type="induction">
    <text evidence="3">The expression of the dibenzodioxocinones biosynthesis cluster is positively regulated by the transcription factor dibT.</text>
</comment>
<comment type="similarity">
    <text evidence="5">Belongs to the LsrG family.</text>
</comment>
<feature type="chain" id="PRO_0000456742" description="Putative monooxygenase GME11364">
    <location>
        <begin position="1"/>
        <end position="120"/>
    </location>
</feature>
<feature type="domain" description="ABM" evidence="1">
    <location>
        <begin position="9"/>
        <end position="99"/>
    </location>
</feature>
<protein>
    <recommendedName>
        <fullName evidence="4">Putative monooxygenase GME11364</fullName>
        <ecNumber evidence="6">1.-.-.-</ecNumber>
    </recommendedName>
    <alternativeName>
        <fullName evidence="4">Dibenzodioxocinones biosynthesis cluster protein GME11364</fullName>
    </alternativeName>
</protein>
<organism>
    <name type="scientific">Pestalotiopsis microspora</name>
    <dbReference type="NCBI Taxonomy" id="85828"/>
    <lineage>
        <taxon>Eukaryota</taxon>
        <taxon>Fungi</taxon>
        <taxon>Dikarya</taxon>
        <taxon>Ascomycota</taxon>
        <taxon>Pezizomycotina</taxon>
        <taxon>Sordariomycetes</taxon>
        <taxon>Xylariomycetidae</taxon>
        <taxon>Amphisphaeriales</taxon>
        <taxon>Sporocadaceae</taxon>
        <taxon>Pestalotiopsis</taxon>
    </lineage>
</organism>
<sequence>MAAKPTPSVSVHIRLTVDPNKINEFLEISRPMFDAVTAEPLNTFFEMYRDDKTPGVFKLVENWDADIDYMMNVQVKKEYYTPYHTALREILLKPHEVELYSRMPGNEWAKLDVKRYVDQE</sequence>
<evidence type="ECO:0000255" key="1">
    <source>
        <dbReference type="PROSITE-ProRule" id="PRU01062"/>
    </source>
</evidence>
<evidence type="ECO:0000269" key="2">
    <source>
    </source>
</evidence>
<evidence type="ECO:0000269" key="3">
    <source>
    </source>
</evidence>
<evidence type="ECO:0000303" key="4">
    <source>
    </source>
</evidence>
<evidence type="ECO:0000305" key="5"/>
<evidence type="ECO:0000305" key="6">
    <source>
    </source>
</evidence>
<accession>A0A5B8YU67</accession>
<gene>
    <name evidence="4" type="ORF">GME11364</name>
</gene>
<name>GME64_PESMI</name>
<dbReference type="EC" id="1.-.-.-" evidence="6"/>
<dbReference type="EMBL" id="MK590983">
    <property type="protein sequence ID" value="QED41495.1"/>
    <property type="molecule type" value="mRNA"/>
</dbReference>
<dbReference type="SMR" id="A0A5B8YU67"/>
<dbReference type="GO" id="GO:0004497">
    <property type="term" value="F:monooxygenase activity"/>
    <property type="evidence" value="ECO:0007669"/>
    <property type="project" value="UniProtKB-KW"/>
</dbReference>
<dbReference type="Gene3D" id="3.30.70.100">
    <property type="match status" value="1"/>
</dbReference>
<dbReference type="InterPro" id="IPR007138">
    <property type="entry name" value="ABM_dom"/>
</dbReference>
<dbReference type="InterPro" id="IPR011008">
    <property type="entry name" value="Dimeric_a/b-barrel"/>
</dbReference>
<dbReference type="Pfam" id="PF03992">
    <property type="entry name" value="ABM"/>
    <property type="match status" value="1"/>
</dbReference>
<dbReference type="SUPFAM" id="SSF54909">
    <property type="entry name" value="Dimeric alpha+beta barrel"/>
    <property type="match status" value="1"/>
</dbReference>
<proteinExistence type="evidence at transcript level"/>